<feature type="chain" id="PRO_1000068858" description="Ribosomal protein bS6--L-glutamate ligase">
    <location>
        <begin position="1"/>
        <end position="300"/>
    </location>
</feature>
<feature type="domain" description="ATP-grasp" evidence="1">
    <location>
        <begin position="104"/>
        <end position="287"/>
    </location>
</feature>
<feature type="binding site" evidence="1">
    <location>
        <position position="141"/>
    </location>
    <ligand>
        <name>ATP</name>
        <dbReference type="ChEBI" id="CHEBI:30616"/>
    </ligand>
</feature>
<feature type="binding site" evidence="1">
    <location>
        <begin position="178"/>
        <end position="179"/>
    </location>
    <ligand>
        <name>ATP</name>
        <dbReference type="ChEBI" id="CHEBI:30616"/>
    </ligand>
</feature>
<feature type="binding site" evidence="1">
    <location>
        <position position="187"/>
    </location>
    <ligand>
        <name>ATP</name>
        <dbReference type="ChEBI" id="CHEBI:30616"/>
    </ligand>
</feature>
<feature type="binding site" evidence="1">
    <location>
        <begin position="211"/>
        <end position="213"/>
    </location>
    <ligand>
        <name>ATP</name>
        <dbReference type="ChEBI" id="CHEBI:30616"/>
    </ligand>
</feature>
<feature type="binding site" evidence="1">
    <location>
        <position position="248"/>
    </location>
    <ligand>
        <name>Mg(2+)</name>
        <dbReference type="ChEBI" id="CHEBI:18420"/>
        <label>1</label>
    </ligand>
</feature>
<feature type="binding site" evidence="1">
    <location>
        <position position="248"/>
    </location>
    <ligand>
        <name>Mn(2+)</name>
        <dbReference type="ChEBI" id="CHEBI:29035"/>
        <label>1</label>
    </ligand>
</feature>
<feature type="binding site" evidence="1">
    <location>
        <position position="260"/>
    </location>
    <ligand>
        <name>Mg(2+)</name>
        <dbReference type="ChEBI" id="CHEBI:18420"/>
        <label>1</label>
    </ligand>
</feature>
<feature type="binding site" evidence="1">
    <location>
        <position position="260"/>
    </location>
    <ligand>
        <name>Mg(2+)</name>
        <dbReference type="ChEBI" id="CHEBI:18420"/>
        <label>2</label>
    </ligand>
</feature>
<feature type="binding site" evidence="1">
    <location>
        <position position="260"/>
    </location>
    <ligand>
        <name>Mn(2+)</name>
        <dbReference type="ChEBI" id="CHEBI:29035"/>
        <label>1</label>
    </ligand>
</feature>
<feature type="binding site" evidence="1">
    <location>
        <position position="260"/>
    </location>
    <ligand>
        <name>Mn(2+)</name>
        <dbReference type="ChEBI" id="CHEBI:29035"/>
        <label>2</label>
    </ligand>
</feature>
<feature type="binding site" evidence="1">
    <location>
        <position position="262"/>
    </location>
    <ligand>
        <name>Mg(2+)</name>
        <dbReference type="ChEBI" id="CHEBI:18420"/>
        <label>2</label>
    </ligand>
</feature>
<feature type="binding site" evidence="1">
    <location>
        <position position="262"/>
    </location>
    <ligand>
        <name>Mn(2+)</name>
        <dbReference type="ChEBI" id="CHEBI:29035"/>
        <label>2</label>
    </ligand>
</feature>
<organism>
    <name type="scientific">Shigella dysenteriae serotype 1 (strain Sd197)</name>
    <dbReference type="NCBI Taxonomy" id="300267"/>
    <lineage>
        <taxon>Bacteria</taxon>
        <taxon>Pseudomonadati</taxon>
        <taxon>Pseudomonadota</taxon>
        <taxon>Gammaproteobacteria</taxon>
        <taxon>Enterobacterales</taxon>
        <taxon>Enterobacteriaceae</taxon>
        <taxon>Shigella</taxon>
    </lineage>
</organism>
<keyword id="KW-0067">ATP-binding</keyword>
<keyword id="KW-0436">Ligase</keyword>
<keyword id="KW-0460">Magnesium</keyword>
<keyword id="KW-0464">Manganese</keyword>
<keyword id="KW-0479">Metal-binding</keyword>
<keyword id="KW-0547">Nucleotide-binding</keyword>
<keyword id="KW-0648">Protein biosynthesis</keyword>
<keyword id="KW-1185">Reference proteome</keyword>
<evidence type="ECO:0000255" key="1">
    <source>
        <dbReference type="HAMAP-Rule" id="MF_01552"/>
    </source>
</evidence>
<protein>
    <recommendedName>
        <fullName evidence="1">Ribosomal protein bS6--L-glutamate ligase</fullName>
        <ecNumber evidence="1">6.3.2.-</ecNumber>
    </recommendedName>
    <alternativeName>
        <fullName evidence="1">Poly-alpha-glutamate synthase</fullName>
    </alternativeName>
    <alternativeName>
        <fullName evidence="1">Ribosomal protein bS6 modification protein</fullName>
    </alternativeName>
</protein>
<sequence>MKIAILSRDGTLYSCKRLREAAIQRGHLVEILDPLSCYMNINPAASSIHYKGRKLPHFDAVIPRIGTAITFYGTAALRQFEMLGSYPLNESVAIARARDKLRSMQLLARQGIDLPVTGIAHSPDDTSDLIDMVGGAPLVVKLVEGTQGIGVVLAETRQAAESVIDAFRGLNAHILVQEYIKEAQGCDIRCLVVGDEVVAAIERRAKEGDFRSNLHRGGAASVASITPQEREIAIKAARTMALDVAGVDILRANRGPLVMEVNASPGLEGIEKTTGIDIAGKMIRWIERHATTEYCLKTGG</sequence>
<gene>
    <name evidence="1" type="primary">rimK</name>
    <name type="ordered locus">SDY_0743</name>
</gene>
<proteinExistence type="inferred from homology"/>
<accession>Q32ID0</accession>
<comment type="function">
    <text evidence="1">An L-glutamate ligase that catalyzes the ATP-dependent post-translational addition of glutamate residues to the C-terminus of ribosomal protein bS6 (RpsF). Is also able to catalyze the synthesis of poly-alpha-glutamate in vitro, via ATP hydrolysis from unprotected glutamate as substrate. The number of glutamate residues added to either RpsF or to poly-alpha-glutamate changes with pH.</text>
</comment>
<comment type="cofactor">
    <cofactor evidence="1">
        <name>Mg(2+)</name>
        <dbReference type="ChEBI" id="CHEBI:18420"/>
    </cofactor>
    <cofactor evidence="1">
        <name>Mn(2+)</name>
        <dbReference type="ChEBI" id="CHEBI:29035"/>
    </cofactor>
    <text evidence="1">Binds 2 magnesium or manganese ions per subunit.</text>
</comment>
<comment type="similarity">
    <text evidence="1">Belongs to the RimK family.</text>
</comment>
<name>RIMK_SHIDS</name>
<dbReference type="EC" id="6.3.2.-" evidence="1"/>
<dbReference type="EMBL" id="CP000034">
    <property type="protein sequence ID" value="ABB60927.1"/>
    <property type="molecule type" value="Genomic_DNA"/>
</dbReference>
<dbReference type="RefSeq" id="WP_000684321.1">
    <property type="nucleotide sequence ID" value="NC_007606.1"/>
</dbReference>
<dbReference type="RefSeq" id="YP_402416.1">
    <property type="nucleotide sequence ID" value="NC_007606.1"/>
</dbReference>
<dbReference type="SMR" id="Q32ID0"/>
<dbReference type="STRING" id="300267.SDY_0743"/>
<dbReference type="EnsemblBacteria" id="ABB60927">
    <property type="protein sequence ID" value="ABB60927"/>
    <property type="gene ID" value="SDY_0743"/>
</dbReference>
<dbReference type="GeneID" id="93776570"/>
<dbReference type="KEGG" id="sdy:SDY_0743"/>
<dbReference type="PATRIC" id="fig|300267.13.peg.857"/>
<dbReference type="HOGENOM" id="CLU_054353_0_1_6"/>
<dbReference type="Proteomes" id="UP000002716">
    <property type="component" value="Chromosome"/>
</dbReference>
<dbReference type="GO" id="GO:0005737">
    <property type="term" value="C:cytoplasm"/>
    <property type="evidence" value="ECO:0007669"/>
    <property type="project" value="TreeGrafter"/>
</dbReference>
<dbReference type="GO" id="GO:0005524">
    <property type="term" value="F:ATP binding"/>
    <property type="evidence" value="ECO:0007669"/>
    <property type="project" value="UniProtKB-UniRule"/>
</dbReference>
<dbReference type="GO" id="GO:0046872">
    <property type="term" value="F:metal ion binding"/>
    <property type="evidence" value="ECO:0007669"/>
    <property type="project" value="UniProtKB-KW"/>
</dbReference>
<dbReference type="GO" id="GO:0018169">
    <property type="term" value="F:ribosomal S6-glutamic acid ligase activity"/>
    <property type="evidence" value="ECO:0007669"/>
    <property type="project" value="UniProtKB-UniRule"/>
</dbReference>
<dbReference type="GO" id="GO:0036211">
    <property type="term" value="P:protein modification process"/>
    <property type="evidence" value="ECO:0007669"/>
    <property type="project" value="InterPro"/>
</dbReference>
<dbReference type="GO" id="GO:0009432">
    <property type="term" value="P:SOS response"/>
    <property type="evidence" value="ECO:0007669"/>
    <property type="project" value="TreeGrafter"/>
</dbReference>
<dbReference type="GO" id="GO:0006412">
    <property type="term" value="P:translation"/>
    <property type="evidence" value="ECO:0007669"/>
    <property type="project" value="UniProtKB-KW"/>
</dbReference>
<dbReference type="FunFam" id="3.40.50.20:FF:000004">
    <property type="entry name" value="Probable alpha-L-glutamate ligase"/>
    <property type="match status" value="1"/>
</dbReference>
<dbReference type="FunFam" id="3.30.1490.20:FF:000005">
    <property type="entry name" value="Probable alpha-L-glutamate ligase 1"/>
    <property type="match status" value="1"/>
</dbReference>
<dbReference type="FunFam" id="3.30.470.20:FF:000016">
    <property type="entry name" value="Ribosomal protein S6--L-glutamate ligase"/>
    <property type="match status" value="1"/>
</dbReference>
<dbReference type="Gene3D" id="3.40.50.20">
    <property type="match status" value="1"/>
</dbReference>
<dbReference type="Gene3D" id="3.30.1490.20">
    <property type="entry name" value="ATP-grasp fold, A domain"/>
    <property type="match status" value="1"/>
</dbReference>
<dbReference type="Gene3D" id="3.30.470.20">
    <property type="entry name" value="ATP-grasp fold, B domain"/>
    <property type="match status" value="1"/>
</dbReference>
<dbReference type="HAMAP" id="MF_01552">
    <property type="entry name" value="RimK"/>
    <property type="match status" value="1"/>
</dbReference>
<dbReference type="InterPro" id="IPR011761">
    <property type="entry name" value="ATP-grasp"/>
</dbReference>
<dbReference type="InterPro" id="IPR013651">
    <property type="entry name" value="ATP-grasp_RimK-type"/>
</dbReference>
<dbReference type="InterPro" id="IPR013815">
    <property type="entry name" value="ATP_grasp_subdomain_1"/>
</dbReference>
<dbReference type="InterPro" id="IPR023533">
    <property type="entry name" value="RimK"/>
</dbReference>
<dbReference type="InterPro" id="IPR041107">
    <property type="entry name" value="Rimk_N"/>
</dbReference>
<dbReference type="InterPro" id="IPR004666">
    <property type="entry name" value="Rp_bS6_RimK/Lys_biosynth_LsyX"/>
</dbReference>
<dbReference type="NCBIfam" id="NF007764">
    <property type="entry name" value="PRK10446.1"/>
    <property type="match status" value="1"/>
</dbReference>
<dbReference type="NCBIfam" id="TIGR00768">
    <property type="entry name" value="rimK_fam"/>
    <property type="match status" value="1"/>
</dbReference>
<dbReference type="PANTHER" id="PTHR21621:SF7">
    <property type="entry name" value="RIBOSOMAL PROTEIN BS6--L-GLUTAMATE LIGASE"/>
    <property type="match status" value="1"/>
</dbReference>
<dbReference type="PANTHER" id="PTHR21621">
    <property type="entry name" value="RIBOSOMAL PROTEIN S6 MODIFICATION PROTEIN"/>
    <property type="match status" value="1"/>
</dbReference>
<dbReference type="Pfam" id="PF08443">
    <property type="entry name" value="RimK"/>
    <property type="match status" value="1"/>
</dbReference>
<dbReference type="Pfam" id="PF18030">
    <property type="entry name" value="Rimk_N"/>
    <property type="match status" value="1"/>
</dbReference>
<dbReference type="SUPFAM" id="SSF56059">
    <property type="entry name" value="Glutathione synthetase ATP-binding domain-like"/>
    <property type="match status" value="1"/>
</dbReference>
<dbReference type="PROSITE" id="PS50975">
    <property type="entry name" value="ATP_GRASP"/>
    <property type="match status" value="1"/>
</dbReference>
<reference key="1">
    <citation type="journal article" date="2005" name="Nucleic Acids Res.">
        <title>Genome dynamics and diversity of Shigella species, the etiologic agents of bacillary dysentery.</title>
        <authorList>
            <person name="Yang F."/>
            <person name="Yang J."/>
            <person name="Zhang X."/>
            <person name="Chen L."/>
            <person name="Jiang Y."/>
            <person name="Yan Y."/>
            <person name="Tang X."/>
            <person name="Wang J."/>
            <person name="Xiong Z."/>
            <person name="Dong J."/>
            <person name="Xue Y."/>
            <person name="Zhu Y."/>
            <person name="Xu X."/>
            <person name="Sun L."/>
            <person name="Chen S."/>
            <person name="Nie H."/>
            <person name="Peng J."/>
            <person name="Xu J."/>
            <person name="Wang Y."/>
            <person name="Yuan Z."/>
            <person name="Wen Y."/>
            <person name="Yao Z."/>
            <person name="Shen Y."/>
            <person name="Qiang B."/>
            <person name="Hou Y."/>
            <person name="Yu J."/>
            <person name="Jin Q."/>
        </authorList>
    </citation>
    <scope>NUCLEOTIDE SEQUENCE [LARGE SCALE GENOMIC DNA]</scope>
    <source>
        <strain>Sd197</strain>
    </source>
</reference>